<keyword id="KW-1003">Cell membrane</keyword>
<keyword id="KW-0343">GTPase activation</keyword>
<keyword id="KW-0449">Lipoprotein</keyword>
<keyword id="KW-0472">Membrane</keyword>
<keyword id="KW-0564">Palmitate</keyword>
<keyword id="KW-1185">Reference proteome</keyword>
<keyword id="KW-0832">Ubl conjugation</keyword>
<name>TBC3C_HUMAN</name>
<evidence type="ECO:0000250" key="1"/>
<evidence type="ECO:0000255" key="2">
    <source>
        <dbReference type="PROSITE-ProRule" id="PRU00163"/>
    </source>
</evidence>
<evidence type="ECO:0000256" key="3">
    <source>
        <dbReference type="SAM" id="MobiDB-lite"/>
    </source>
</evidence>
<evidence type="ECO:0000269" key="4">
    <source>
    </source>
</evidence>
<evidence type="ECO:0000305" key="5"/>
<dbReference type="EMBL" id="AC233968">
    <property type="status" value="NOT_ANNOTATED_CDS"/>
    <property type="molecule type" value="Genomic_DNA"/>
</dbReference>
<dbReference type="EMBL" id="BC071680">
    <property type="protein sequence ID" value="AAH71680.1"/>
    <property type="molecule type" value="mRNA"/>
</dbReference>
<dbReference type="CCDS" id="CCDS74045.1"/>
<dbReference type="RefSeq" id="NP_001001418.5">
    <property type="nucleotide sequence ID" value="NM_001001418.6"/>
</dbReference>
<dbReference type="RefSeq" id="NP_001116863.3">
    <property type="nucleotide sequence ID" value="NM_001123391.3"/>
</dbReference>
<dbReference type="RefSeq" id="NP_001278391.1">
    <property type="nucleotide sequence ID" value="NM_001291462.1"/>
</dbReference>
<dbReference type="RefSeq" id="XP_047292038.1">
    <property type="nucleotide sequence ID" value="XM_047436082.1"/>
</dbReference>
<dbReference type="SMR" id="Q6IPX1"/>
<dbReference type="BioGRID" id="3190786">
    <property type="interactions" value="10"/>
</dbReference>
<dbReference type="FunCoup" id="Q6IPX1">
    <property type="interactions" value="51"/>
</dbReference>
<dbReference type="IntAct" id="Q6IPX1">
    <property type="interactions" value="1"/>
</dbReference>
<dbReference type="iPTMnet" id="Q6IPX1"/>
<dbReference type="PhosphoSitePlus" id="Q6IPX1"/>
<dbReference type="BioMuta" id="TBC1D3C"/>
<dbReference type="DMDM" id="296452923"/>
<dbReference type="jPOST" id="Q6IPX1"/>
<dbReference type="MassIVE" id="Q6IPX1"/>
<dbReference type="PeptideAtlas" id="Q6IPX1"/>
<dbReference type="Antibodypedia" id="76589">
    <property type="antibodies" value="33 antibodies from 10 providers"/>
</dbReference>
<dbReference type="DNASU" id="414060"/>
<dbReference type="Ensembl" id="ENST00000622206.2">
    <property type="protein sequence ID" value="ENSP00000482345.1"/>
    <property type="gene ID" value="ENSG00000278299.6"/>
</dbReference>
<dbReference type="GeneID" id="101060321"/>
<dbReference type="GeneID" id="414060"/>
<dbReference type="GeneID" id="729873"/>
<dbReference type="KEGG" id="hsa:101060321"/>
<dbReference type="KEGG" id="hsa:414060"/>
<dbReference type="KEGG" id="hsa:729873"/>
<dbReference type="MANE-Select" id="ENST00000622206.2">
    <property type="protein sequence ID" value="ENSP00000482345.1"/>
    <property type="RefSeq nucleotide sequence ID" value="NM_001001418.6"/>
    <property type="RefSeq protein sequence ID" value="NP_001001418.5"/>
</dbReference>
<dbReference type="AGR" id="HGNC:19031"/>
<dbReference type="AGR" id="HGNC:24889"/>
<dbReference type="AGR" id="HGNC:29860"/>
<dbReference type="CTD" id="101060321"/>
<dbReference type="CTD" id="414060"/>
<dbReference type="CTD" id="729873"/>
<dbReference type="DisGeNET" id="414060"/>
<dbReference type="DisGeNET" id="729873"/>
<dbReference type="GeneCards" id="TBC1D3C"/>
<dbReference type="HGNC" id="HGNC:24889">
    <property type="gene designation" value="TBC1D3C"/>
</dbReference>
<dbReference type="HPA" id="ENSG00000278299">
    <property type="expression patterns" value="Tissue enhanced (testis)"/>
</dbReference>
<dbReference type="MIM" id="610806">
    <property type="type" value="gene"/>
</dbReference>
<dbReference type="neXtProt" id="NX_Q6IPX1"/>
<dbReference type="OpenTargets" id="ENSG00000274611"/>
<dbReference type="PharmGKB" id="PA145007622"/>
<dbReference type="VEuPathDB" id="HostDB:ENSG00000278299"/>
<dbReference type="HOGENOM" id="CLU_005350_10_5_1"/>
<dbReference type="InParanoid" id="Q6IPX1"/>
<dbReference type="OrthoDB" id="9535050at2759"/>
<dbReference type="PAN-GO" id="Q6IPX1">
    <property type="GO annotations" value="2 GO annotations based on evolutionary models"/>
</dbReference>
<dbReference type="TreeFam" id="TF318099"/>
<dbReference type="PathwayCommons" id="Q6IPX1"/>
<dbReference type="SignaLink" id="Q6IPX1"/>
<dbReference type="BioGRID-ORCS" id="101060321">
    <property type="hits" value="36 hits in 181 CRISPR screens"/>
</dbReference>
<dbReference type="BioGRID-ORCS" id="414060">
    <property type="hits" value="392 hits in 575 CRISPR screens"/>
</dbReference>
<dbReference type="BioGRID-ORCS" id="729873">
    <property type="hits" value="42 hits in 613 CRISPR screens"/>
</dbReference>
<dbReference type="Pharos" id="Q6IPX1">
    <property type="development level" value="Tdark"/>
</dbReference>
<dbReference type="PRO" id="PR:Q6IPX1"/>
<dbReference type="Proteomes" id="UP000005640">
    <property type="component" value="Chromosome 17"/>
</dbReference>
<dbReference type="RNAct" id="Q6IPX1">
    <property type="molecule type" value="protein"/>
</dbReference>
<dbReference type="Bgee" id="ENSG00000278299">
    <property type="expression patterns" value="Expressed in granulocyte and 87 other cell types or tissues"/>
</dbReference>
<dbReference type="GO" id="GO:0005886">
    <property type="term" value="C:plasma membrane"/>
    <property type="evidence" value="ECO:0007669"/>
    <property type="project" value="UniProtKB-SubCell"/>
</dbReference>
<dbReference type="GO" id="GO:0005096">
    <property type="term" value="F:GTPase activator activity"/>
    <property type="evidence" value="ECO:0000318"/>
    <property type="project" value="GO_Central"/>
</dbReference>
<dbReference type="FunFam" id="1.10.10.750:FF:000001">
    <property type="entry name" value="TBC1 domain family member 10A"/>
    <property type="match status" value="1"/>
</dbReference>
<dbReference type="FunFam" id="1.10.8.270:FF:000016">
    <property type="entry name" value="TBC1 domain family member 2A"/>
    <property type="match status" value="1"/>
</dbReference>
<dbReference type="FunFam" id="1.10.472.80:FF:000058">
    <property type="entry name" value="Ubiquitin specific peptidase 6"/>
    <property type="match status" value="1"/>
</dbReference>
<dbReference type="Gene3D" id="1.10.8.270">
    <property type="entry name" value="putative rabgap domain of human tbc1 domain family member 14 like domains"/>
    <property type="match status" value="1"/>
</dbReference>
<dbReference type="Gene3D" id="1.10.10.750">
    <property type="entry name" value="Ypt/Rab-GAP domain of gyp1p, domain 1"/>
    <property type="match status" value="1"/>
</dbReference>
<dbReference type="Gene3D" id="1.10.472.80">
    <property type="entry name" value="Ypt/Rab-GAP domain of gyp1p, domain 3"/>
    <property type="match status" value="1"/>
</dbReference>
<dbReference type="InterPro" id="IPR000195">
    <property type="entry name" value="Rab-GAP-TBC_dom"/>
</dbReference>
<dbReference type="InterPro" id="IPR035969">
    <property type="entry name" value="Rab-GAP_TBC_sf"/>
</dbReference>
<dbReference type="InterPro" id="IPR050302">
    <property type="entry name" value="Rab_GAP_TBC_domain"/>
</dbReference>
<dbReference type="PANTHER" id="PTHR47219">
    <property type="entry name" value="RAB GTPASE-ACTIVATING PROTEIN 1-LIKE"/>
    <property type="match status" value="1"/>
</dbReference>
<dbReference type="PANTHER" id="PTHR47219:SF25">
    <property type="entry name" value="RAB-GAP TBC DOMAIN-CONTAINING PROTEIN"/>
    <property type="match status" value="1"/>
</dbReference>
<dbReference type="Pfam" id="PF00566">
    <property type="entry name" value="RabGAP-TBC"/>
    <property type="match status" value="1"/>
</dbReference>
<dbReference type="SMART" id="SM00164">
    <property type="entry name" value="TBC"/>
    <property type="match status" value="1"/>
</dbReference>
<dbReference type="SUPFAM" id="SSF47923">
    <property type="entry name" value="Ypt/Rab-GAP domain of gyp1p"/>
    <property type="match status" value="1"/>
</dbReference>
<dbReference type="PROSITE" id="PS50086">
    <property type="entry name" value="TBC_RABGAP"/>
    <property type="match status" value="1"/>
</dbReference>
<feature type="chain" id="PRO_0000300265" description="TBC1 domain family member 3C">
    <location>
        <begin position="1"/>
        <end position="549"/>
    </location>
</feature>
<feature type="domain" description="Rab-GAP TBC" evidence="2">
    <location>
        <begin position="101"/>
        <end position="293"/>
    </location>
</feature>
<feature type="region of interest" description="Disordered" evidence="3">
    <location>
        <begin position="350"/>
        <end position="419"/>
    </location>
</feature>
<feature type="compositionally biased region" description="Low complexity" evidence="3">
    <location>
        <begin position="398"/>
        <end position="417"/>
    </location>
</feature>
<feature type="lipid moiety-binding region" description="S-palmitoyl cysteine" evidence="1">
    <location>
        <position position="318"/>
    </location>
</feature>
<feature type="lipid moiety-binding region" description="S-palmitoyl cysteine" evidence="1">
    <location>
        <position position="325"/>
    </location>
</feature>
<feature type="sequence conflict" description="In Ref. 2; AAH71680." evidence="5" ref="2">
    <original>T</original>
    <variation>I</variation>
    <location>
        <position position="117"/>
    </location>
</feature>
<feature type="sequence conflict" description="In Ref. 2; AAH71680." evidence="5" ref="2">
    <original>V</original>
    <variation>I</variation>
    <location>
        <position position="149"/>
    </location>
</feature>
<feature type="sequence conflict" description="In Ref. 2; AAH71680." evidence="5" ref="2">
    <original>I</original>
    <variation>M</variation>
    <location>
        <position position="157"/>
    </location>
</feature>
<feature type="sequence conflict" description="In Ref. 2; AAH71680." evidence="5" ref="2">
    <original>K</original>
    <variation>Q</variation>
    <location>
        <position position="354"/>
    </location>
</feature>
<reference key="1">
    <citation type="journal article" date="2006" name="Nature">
        <title>DNA sequence of human chromosome 17 and analysis of rearrangement in the human lineage.</title>
        <authorList>
            <person name="Zody M.C."/>
            <person name="Garber M."/>
            <person name="Adams D.J."/>
            <person name="Sharpe T."/>
            <person name="Harrow J."/>
            <person name="Lupski J.R."/>
            <person name="Nicholson C."/>
            <person name="Searle S.M."/>
            <person name="Wilming L."/>
            <person name="Young S.K."/>
            <person name="Abouelleil A."/>
            <person name="Allen N.R."/>
            <person name="Bi W."/>
            <person name="Bloom T."/>
            <person name="Borowsky M.L."/>
            <person name="Bugalter B.E."/>
            <person name="Butler J."/>
            <person name="Chang J.L."/>
            <person name="Chen C.-K."/>
            <person name="Cook A."/>
            <person name="Corum B."/>
            <person name="Cuomo C.A."/>
            <person name="de Jong P.J."/>
            <person name="DeCaprio D."/>
            <person name="Dewar K."/>
            <person name="FitzGerald M."/>
            <person name="Gilbert J."/>
            <person name="Gibson R."/>
            <person name="Gnerre S."/>
            <person name="Goldstein S."/>
            <person name="Grafham D.V."/>
            <person name="Grocock R."/>
            <person name="Hafez N."/>
            <person name="Hagopian D.S."/>
            <person name="Hart E."/>
            <person name="Norman C.H."/>
            <person name="Humphray S."/>
            <person name="Jaffe D.B."/>
            <person name="Jones M."/>
            <person name="Kamal M."/>
            <person name="Khodiyar V.K."/>
            <person name="LaButti K."/>
            <person name="Laird G."/>
            <person name="Lehoczky J."/>
            <person name="Liu X."/>
            <person name="Lokyitsang T."/>
            <person name="Loveland J."/>
            <person name="Lui A."/>
            <person name="Macdonald P."/>
            <person name="Major J.E."/>
            <person name="Matthews L."/>
            <person name="Mauceli E."/>
            <person name="McCarroll S.A."/>
            <person name="Mihalev A.H."/>
            <person name="Mudge J."/>
            <person name="Nguyen C."/>
            <person name="Nicol R."/>
            <person name="O'Leary S.B."/>
            <person name="Osoegawa K."/>
            <person name="Schwartz D.C."/>
            <person name="Shaw-Smith C."/>
            <person name="Stankiewicz P."/>
            <person name="Steward C."/>
            <person name="Swarbreck D."/>
            <person name="Venkataraman V."/>
            <person name="Whittaker C.A."/>
            <person name="Yang X."/>
            <person name="Zimmer A.R."/>
            <person name="Bradley A."/>
            <person name="Hubbard T."/>
            <person name="Birren B.W."/>
            <person name="Rogers J."/>
            <person name="Lander E.S."/>
            <person name="Nusbaum C."/>
        </authorList>
    </citation>
    <scope>NUCLEOTIDE SEQUENCE [LARGE SCALE GENOMIC DNA]</scope>
</reference>
<reference key="2">
    <citation type="journal article" date="2004" name="Genome Res.">
        <title>The status, quality, and expansion of the NIH full-length cDNA project: the Mammalian Gene Collection (MGC).</title>
        <authorList>
            <consortium name="The MGC Project Team"/>
        </authorList>
    </citation>
    <scope>NUCLEOTIDE SEQUENCE [LARGE SCALE MRNA]</scope>
    <source>
        <tissue>Brain</tissue>
    </source>
</reference>
<reference key="3">
    <citation type="journal article" date="2006" name="Genomics">
        <title>TBC1D3, a hominoid oncoprotein, is encoded by a cluster of paralogues located on chromosome 17q12.</title>
        <authorList>
            <person name="Hodzic D."/>
            <person name="Kong C."/>
            <person name="Wainszelbaum M.J."/>
            <person name="Charron A.J."/>
            <person name="Su X."/>
            <person name="Stahl P.D."/>
        </authorList>
    </citation>
    <scope>NOMENCLATURE</scope>
    <scope>TISSUE SPECIFICITY</scope>
</reference>
<reference key="4">
    <citation type="journal article" date="2010" name="Science">
        <title>Diversity of human copy number variation and multicopy genes.</title>
        <authorList>
            <person name="Sudmant P.H."/>
            <person name="Kitzman J.O."/>
            <person name="Antonacci F."/>
            <person name="Alkan C."/>
            <person name="Malig M."/>
            <person name="Tsalenko A."/>
            <person name="Sampas N."/>
            <person name="Bruhn L."/>
            <person name="Shendure J."/>
            <person name="Eichler E.E."/>
        </authorList>
    </citation>
    <scope>MISCELLANEOUS</scope>
    <scope>COPY NUMBER VARIATION</scope>
</reference>
<organism>
    <name type="scientific">Homo sapiens</name>
    <name type="common">Human</name>
    <dbReference type="NCBI Taxonomy" id="9606"/>
    <lineage>
        <taxon>Eukaryota</taxon>
        <taxon>Metazoa</taxon>
        <taxon>Chordata</taxon>
        <taxon>Craniata</taxon>
        <taxon>Vertebrata</taxon>
        <taxon>Euteleostomi</taxon>
        <taxon>Mammalia</taxon>
        <taxon>Eutheria</taxon>
        <taxon>Euarchontoglires</taxon>
        <taxon>Primates</taxon>
        <taxon>Haplorrhini</taxon>
        <taxon>Catarrhini</taxon>
        <taxon>Hominidae</taxon>
        <taxon>Homo</taxon>
    </lineage>
</organism>
<sequence length="549" mass="62187">MDVVEVAGSWWAQEREDIIMKYEKGHRAGLPEDKGPKPFRSYNNNVDHLGIVHETELPPLTAREAKQIRREISRKSKWVDMLGDWEKYKSSRKLIDRAYKGMPMNIRGPMWSVLLNTEEMKLKNPGRYQIMKEKGKRSSEHIQRIDRDVSGTLRKHIFFRDRYGTKQRELLHILLAYEEYNPEVGYCRDLSHIAALFLLYLPEEDAFWALVQLLASERHSLQGFHSPNGGTVQGLQDQQEHVVATSQPKTMGHQDKKDLCGQCSPLGCLIRILIDGISLGLTLRLWDVYLVEGEQALMPITRIAFKVQQKRLTKTSRCGPWARFCNRFVDTWARDEDTVLKHLRASMKKLTRKKGDLPPPAKPEQGSSASRPVPASRGGKTLCKGDRQAPPGPPARFPRPIWSASPPRAPRSSTPCPGGAVREDTYPVGTQGVPSPALAQGGPQGSWRFLQWNSMPRLPTDLDVEGPWFRHYDFRQSCWVRAISQEDQLAPCWQAEHPAERVRSAFAAPSTDSDQGTPFRARDEQQCAPTSGPCLCGLHLESSQFPPGF</sequence>
<proteinExistence type="evidence at transcript level"/>
<comment type="function">
    <text evidence="1">Acts as a GTPase activating protein for RAB5. Does not act on RAB4 or RAB11 (By similarity).</text>
</comment>
<comment type="subcellular location">
    <subcellularLocation>
        <location evidence="1">Cell membrane</location>
        <topology evidence="1">Lipid-anchor</topology>
    </subcellularLocation>
    <text evidence="1">Associated with lipid rafts.</text>
</comment>
<comment type="tissue specificity">
    <text evidence="4">Expressed in pancreas, thymus and testis.</text>
</comment>
<comment type="PTM">
    <text evidence="1">Ubiquitinated by a CUL7-based E3 ligase, which leads to proteasomal degradation.</text>
</comment>
<comment type="PTM">
    <text evidence="1">Palmitoylation is required for membrane localization and protects TBC1D3 from ubiquitination.</text>
</comment>
<comment type="miscellaneous">
    <text evidence="5">TBC1D3 is encoded by a collection of very similar paralogs with multiple copies of each paralog, some human genomes encoding well over 50 copies depending on ethnic origin of the donor.</text>
</comment>
<protein>
    <recommendedName>
        <fullName>TBC1 domain family member 3C</fullName>
    </recommendedName>
</protein>
<accession>Q6IPX1</accession>
<gene>
    <name type="primary">TBC1D3C</name>
    <name type="synonym">TBC1D3D</name>
</gene>